<sequence length="517" mass="58966">MAKERCQKRSFQDTLEDIKNRMKEKRNKNLAGIGKRKSFIVAPGQVPTNTATLLRYYQDNNRLLVLALENEKSKVREAQDVILQLRKECYYLTCQLYALKEKLTSRQSEETTQNWKGRPSDVVSSIDNTTRDLSGKSLQQIAVEETDCPYQTTEPSPAVTPETQGCDFDSGKVESTDEVLPRTISIRRHLRKDFSNISHSTTLEDCKASPRVAQSLEVKGSRCREVTVTLHRLENVCLWNKDQISLCSRLINPAKITETEVILSSKPEQIESKHKRARKRRAEQRRTKQRCKSKSSLRSKGNKNKDKQGLPPTTLDGGIGSCDAYDFNLKGTVHPTPFRQKMNNGCNKETDSSNSEVSDLECSTSEDESDDLYLPPSKRLRDYRESERAVTRPRSKRGLQYPDGKERKEVLPSTAPTGIPPETQESPRCSLKDVTNILQCPRVKIRKPSLPPKRREDSPAVALTKRRCSTIKSYKEPTLASKLRRGDPFTDLCFLNSPIFKQKRGMRCPKRRTKQTQ</sequence>
<name>SGO1_MOUSE</name>
<feature type="chain" id="PRO_0000055437" description="Shugoshin 1">
    <location>
        <begin position="1"/>
        <end position="517"/>
    </location>
</feature>
<feature type="region of interest" description="Necessary for interaction with PPP2CA and PPP2R1A" evidence="1">
    <location>
        <begin position="1"/>
        <end position="176"/>
    </location>
</feature>
<feature type="region of interest" description="Disordered" evidence="4">
    <location>
        <begin position="107"/>
        <end position="136"/>
    </location>
</feature>
<feature type="region of interest" description="Disordered" evidence="4">
    <location>
        <begin position="149"/>
        <end position="173"/>
    </location>
</feature>
<feature type="region of interest" description="Disordered" evidence="4">
    <location>
        <begin position="267"/>
        <end position="317"/>
    </location>
</feature>
<feature type="region of interest" description="Disordered" evidence="4">
    <location>
        <begin position="334"/>
        <end position="427"/>
    </location>
</feature>
<feature type="coiled-coil region" evidence="3">
    <location>
        <begin position="1"/>
        <end position="89"/>
    </location>
</feature>
<feature type="coiled-coil region" evidence="3">
    <location>
        <begin position="268"/>
        <end position="291"/>
    </location>
</feature>
<feature type="short sequence motif" description="PXVXL/I motif" evidence="2">
    <location>
        <begin position="441"/>
        <end position="445"/>
    </location>
</feature>
<feature type="short sequence motif" description="D-box" evidence="1">
    <location>
        <begin position="447"/>
        <end position="455"/>
    </location>
</feature>
<feature type="compositionally biased region" description="Basic residues" evidence="4">
    <location>
        <begin position="273"/>
        <end position="302"/>
    </location>
</feature>
<feature type="compositionally biased region" description="Polar residues" evidence="4">
    <location>
        <begin position="341"/>
        <end position="363"/>
    </location>
</feature>
<feature type="compositionally biased region" description="Basic and acidic residues" evidence="4">
    <location>
        <begin position="379"/>
        <end position="390"/>
    </location>
</feature>
<feature type="modified residue" description="Phosphoserine" evidence="2">
    <location>
        <position position="426"/>
    </location>
</feature>
<feature type="modified residue" description="Phosphoserine; by NEK2" evidence="2">
    <location>
        <position position="497"/>
    </location>
</feature>
<feature type="splice variant" id="VSP_016796" description="In isoform 2." evidence="7">
    <original>GK</original>
    <variation>ES</variation>
    <location>
        <begin position="171"/>
        <end position="172"/>
    </location>
</feature>
<feature type="splice variant" id="VSP_016797" description="In isoform 2." evidence="7">
    <location>
        <begin position="173"/>
        <end position="517"/>
    </location>
</feature>
<feature type="sequence conflict" description="In Ref. 2; BAE32427." evidence="8" ref="2">
    <original>S</original>
    <variation>P</variation>
    <location>
        <position position="134"/>
    </location>
</feature>
<feature type="sequence conflict" description="In Ref. 2; BAE32427." evidence="8" ref="2">
    <original>S</original>
    <variation>T</variation>
    <location>
        <position position="386"/>
    </location>
</feature>
<feature type="sequence conflict" description="In Ref. 2; BAE32427." evidence="8" ref="2">
    <original>A</original>
    <variation>S</variation>
    <location>
        <position position="462"/>
    </location>
</feature>
<protein>
    <recommendedName>
        <fullName evidence="2">Shugoshin 1</fullName>
    </recommendedName>
    <alternativeName>
        <fullName>Shugoshin-like 1</fullName>
    </alternativeName>
</protein>
<proteinExistence type="evidence at transcript level"/>
<evidence type="ECO:0000250" key="1"/>
<evidence type="ECO:0000250" key="2">
    <source>
        <dbReference type="UniProtKB" id="Q5FBB7"/>
    </source>
</evidence>
<evidence type="ECO:0000255" key="3"/>
<evidence type="ECO:0000256" key="4">
    <source>
        <dbReference type="SAM" id="MobiDB-lite"/>
    </source>
</evidence>
<evidence type="ECO:0000269" key="5">
    <source>
    </source>
</evidence>
<evidence type="ECO:0000269" key="6">
    <source>
    </source>
</evidence>
<evidence type="ECO:0000303" key="7">
    <source>
    </source>
</evidence>
<evidence type="ECO:0000305" key="8"/>
<comment type="function">
    <text evidence="2 5 6">Plays a central role in chromosome cohesion during mitosis by preventing premature dissociation of cohesin complex from centromeres after prophase, when most of cohesin complex dissociates from chromosomes arms. May act by preventing phosphorylation of the STAG2 subunit of cohesin complex at the centromere, ensuring cohesin persistence at centromere until cohesin cleavage by ESPL1/separase at anaphase. Essential for proper chromosome segregation during mitosis and this function requires interaction with PPP2R1A. Its phosphorylated form is necessary for chromosome congression and for the proper attachment of spindle microtubule to the kinetochore. Necessary for kinetochore localization of PLK1 and CENPF. May play a role in the tension sensing mechanism of the spindle-assembly checkpoint by regulating PLK1 kinetochore affinity. Involved in centromeric enrichment of AUKRB in prometaphase.</text>
</comment>
<comment type="subunit">
    <text evidence="2">Interacts with PPP2CA (or PPP2CB), PPP2R1B, PPP2R5A, PPP2R5B, PPP2R5C, PPP2R5D, PPP2R5E, SET, LRRC59, RBM10 (or RBM5), RPL10A, RPL28, RPL7, RPL7A and RPLP1. Interaction with protein phosphatase 2A occurs most probably through direct binding to the regulatory B56 subunits: PPP2R1B, PPP2R5A, PPP2R5B, PPP2R5C, PPP2R5D, PPP2R5E. Interacts with PPP2R1A and NEK2. Interacts with CDCA8 (By similarity).</text>
</comment>
<comment type="subcellular location">
    <subcellularLocation>
        <location evidence="2">Nucleus</location>
    </subcellularLocation>
    <subcellularLocation>
        <location evidence="2">Chromosome</location>
        <location evidence="2">Centromere</location>
    </subcellularLocation>
    <subcellularLocation>
        <location evidence="2">Chromosome</location>
        <location evidence="2">Centromere</location>
        <location evidence="2">Kinetochore</location>
    </subcellularLocation>
    <subcellularLocation>
        <location evidence="2">Cytoplasm</location>
        <location evidence="2">Cytoskeleton</location>
        <location evidence="2">Spindle pole</location>
    </subcellularLocation>
    <subcellularLocation>
        <location evidence="2">Cytoplasm</location>
        <location evidence="2">Cytoskeleton</location>
        <location evidence="2">Microtubule organizing center</location>
        <location evidence="2">Centrosome</location>
    </subcellularLocation>
    <subcellularLocation>
        <location evidence="2">Nucleus speckle</location>
    </subcellularLocation>
    <text evidence="2">Localizes to the inner centromere throughout prophase until metaphase and disappears at anaphase. Centromeric localization requires the presence of BUB1 and the interaction with PPP2R1A. Colocalizes with NEK2 at the kinetochore. Colocalizes with and SS18L1 at the kinetochore. Phosphorylation by AUKRB and the presence of BUB1 are required for localization to the kinetochore. Isoform 1 primarily localizes to kinetochores during G2 phase and mitotic prophase, metaphase, and anaphase and does not appear to be associated with kinetochores during late mitosis. Isoform 3 is found at the centrosome in interphase and at spindle poles in mitosis and its spindle pole localization is PLK1 dependent. Isoform 3 does not localize to kinetochores during any stages of the cell cycle.</text>
</comment>
<comment type="alternative products">
    <event type="alternative splicing"/>
    <isoform>
        <id>Q9CXH7-1</id>
        <name>1</name>
        <name>1A</name>
        <sequence type="displayed"/>
    </isoform>
    <isoform>
        <id>Q9CXH7-2</id>
        <name>2</name>
        <name>1B</name>
        <sequence type="described" ref="VSP_016796 VSP_016797"/>
    </isoform>
</comment>
<comment type="tissue specificity">
    <text evidence="5">Ubiquitously expressed in proliferating cells. Moderately expressed in the oocytes.</text>
</comment>
<comment type="PTM">
    <text evidence="1">Ubiquitinated and degraded during mitotic exit by APC/C-Cdh1.</text>
</comment>
<comment type="PTM">
    <text evidence="1">Phosphorylation by NEK2 is essential for chromosome congression in mitosis and for the proper attachment of spindle microtubule to the kinetochore. Phosphorylated by PLK1 and AUKRB (By similarity).</text>
</comment>
<comment type="miscellaneous">
    <text>Shugoshin is Japanese for guardian spirit (as it is known to be a protector of centromeric cohesin).</text>
</comment>
<comment type="similarity">
    <text evidence="8">Belongs to the shugoshin family.</text>
</comment>
<keyword id="KW-0025">Alternative splicing</keyword>
<keyword id="KW-0131">Cell cycle</keyword>
<keyword id="KW-0132">Cell division</keyword>
<keyword id="KW-0137">Centromere</keyword>
<keyword id="KW-0158">Chromosome</keyword>
<keyword id="KW-0159">Chromosome partition</keyword>
<keyword id="KW-0175">Coiled coil</keyword>
<keyword id="KW-0963">Cytoplasm</keyword>
<keyword id="KW-0206">Cytoskeleton</keyword>
<keyword id="KW-0995">Kinetochore</keyword>
<keyword id="KW-0498">Mitosis</keyword>
<keyword id="KW-0539">Nucleus</keyword>
<keyword id="KW-0597">Phosphoprotein</keyword>
<keyword id="KW-1185">Reference proteome</keyword>
<keyword id="KW-0832">Ubl conjugation</keyword>
<accession>Q9CXH7</accession>
<accession>Q3U4K4</accession>
<accession>Q588H1</accession>
<accession>Q8BKW2</accession>
<reference key="1">
    <citation type="journal article" date="2005" name="PLoS Biol.">
        <title>Shugoshin prevents dissociation of cohesin from centromeres during mitosis in vertebrate cells.</title>
        <authorList>
            <person name="McGuinness B.E."/>
            <person name="Hirota T."/>
            <person name="Kudo N.R."/>
            <person name="Peters J.-M."/>
            <person name="Nasmyth K."/>
        </authorList>
    </citation>
    <scope>NUCLEOTIDE SEQUENCE [MRNA] (ISOFORMS 1 AND 2)</scope>
    <source>
        <tissue>Testis</tissue>
    </source>
</reference>
<reference key="2">
    <citation type="journal article" date="2005" name="Science">
        <title>The transcriptional landscape of the mammalian genome.</title>
        <authorList>
            <person name="Carninci P."/>
            <person name="Kasukawa T."/>
            <person name="Katayama S."/>
            <person name="Gough J."/>
            <person name="Frith M.C."/>
            <person name="Maeda N."/>
            <person name="Oyama R."/>
            <person name="Ravasi T."/>
            <person name="Lenhard B."/>
            <person name="Wells C."/>
            <person name="Kodzius R."/>
            <person name="Shimokawa K."/>
            <person name="Bajic V.B."/>
            <person name="Brenner S.E."/>
            <person name="Batalov S."/>
            <person name="Forrest A.R."/>
            <person name="Zavolan M."/>
            <person name="Davis M.J."/>
            <person name="Wilming L.G."/>
            <person name="Aidinis V."/>
            <person name="Allen J.E."/>
            <person name="Ambesi-Impiombato A."/>
            <person name="Apweiler R."/>
            <person name="Aturaliya R.N."/>
            <person name="Bailey T.L."/>
            <person name="Bansal M."/>
            <person name="Baxter L."/>
            <person name="Beisel K.W."/>
            <person name="Bersano T."/>
            <person name="Bono H."/>
            <person name="Chalk A.M."/>
            <person name="Chiu K.P."/>
            <person name="Choudhary V."/>
            <person name="Christoffels A."/>
            <person name="Clutterbuck D.R."/>
            <person name="Crowe M.L."/>
            <person name="Dalla E."/>
            <person name="Dalrymple B.P."/>
            <person name="de Bono B."/>
            <person name="Della Gatta G."/>
            <person name="di Bernardo D."/>
            <person name="Down T."/>
            <person name="Engstrom P."/>
            <person name="Fagiolini M."/>
            <person name="Faulkner G."/>
            <person name="Fletcher C.F."/>
            <person name="Fukushima T."/>
            <person name="Furuno M."/>
            <person name="Futaki S."/>
            <person name="Gariboldi M."/>
            <person name="Georgii-Hemming P."/>
            <person name="Gingeras T.R."/>
            <person name="Gojobori T."/>
            <person name="Green R.E."/>
            <person name="Gustincich S."/>
            <person name="Harbers M."/>
            <person name="Hayashi Y."/>
            <person name="Hensch T.K."/>
            <person name="Hirokawa N."/>
            <person name="Hill D."/>
            <person name="Huminiecki L."/>
            <person name="Iacono M."/>
            <person name="Ikeo K."/>
            <person name="Iwama A."/>
            <person name="Ishikawa T."/>
            <person name="Jakt M."/>
            <person name="Kanapin A."/>
            <person name="Katoh M."/>
            <person name="Kawasawa Y."/>
            <person name="Kelso J."/>
            <person name="Kitamura H."/>
            <person name="Kitano H."/>
            <person name="Kollias G."/>
            <person name="Krishnan S.P."/>
            <person name="Kruger A."/>
            <person name="Kummerfeld S.K."/>
            <person name="Kurochkin I.V."/>
            <person name="Lareau L.F."/>
            <person name="Lazarevic D."/>
            <person name="Lipovich L."/>
            <person name="Liu J."/>
            <person name="Liuni S."/>
            <person name="McWilliam S."/>
            <person name="Madan Babu M."/>
            <person name="Madera M."/>
            <person name="Marchionni L."/>
            <person name="Matsuda H."/>
            <person name="Matsuzawa S."/>
            <person name="Miki H."/>
            <person name="Mignone F."/>
            <person name="Miyake S."/>
            <person name="Morris K."/>
            <person name="Mottagui-Tabar S."/>
            <person name="Mulder N."/>
            <person name="Nakano N."/>
            <person name="Nakauchi H."/>
            <person name="Ng P."/>
            <person name="Nilsson R."/>
            <person name="Nishiguchi S."/>
            <person name="Nishikawa S."/>
            <person name="Nori F."/>
            <person name="Ohara O."/>
            <person name="Okazaki Y."/>
            <person name="Orlando V."/>
            <person name="Pang K.C."/>
            <person name="Pavan W.J."/>
            <person name="Pavesi G."/>
            <person name="Pesole G."/>
            <person name="Petrovsky N."/>
            <person name="Piazza S."/>
            <person name="Reed J."/>
            <person name="Reid J.F."/>
            <person name="Ring B.Z."/>
            <person name="Ringwald M."/>
            <person name="Rost B."/>
            <person name="Ruan Y."/>
            <person name="Salzberg S.L."/>
            <person name="Sandelin A."/>
            <person name="Schneider C."/>
            <person name="Schoenbach C."/>
            <person name="Sekiguchi K."/>
            <person name="Semple C.A."/>
            <person name="Seno S."/>
            <person name="Sessa L."/>
            <person name="Sheng Y."/>
            <person name="Shibata Y."/>
            <person name="Shimada H."/>
            <person name="Shimada K."/>
            <person name="Silva D."/>
            <person name="Sinclair B."/>
            <person name="Sperling S."/>
            <person name="Stupka E."/>
            <person name="Sugiura K."/>
            <person name="Sultana R."/>
            <person name="Takenaka Y."/>
            <person name="Taki K."/>
            <person name="Tammoja K."/>
            <person name="Tan S.L."/>
            <person name="Tang S."/>
            <person name="Taylor M.S."/>
            <person name="Tegner J."/>
            <person name="Teichmann S.A."/>
            <person name="Ueda H.R."/>
            <person name="van Nimwegen E."/>
            <person name="Verardo R."/>
            <person name="Wei C.L."/>
            <person name="Yagi K."/>
            <person name="Yamanishi H."/>
            <person name="Zabarovsky E."/>
            <person name="Zhu S."/>
            <person name="Zimmer A."/>
            <person name="Hide W."/>
            <person name="Bult C."/>
            <person name="Grimmond S.M."/>
            <person name="Teasdale R.D."/>
            <person name="Liu E.T."/>
            <person name="Brusic V."/>
            <person name="Quackenbush J."/>
            <person name="Wahlestedt C."/>
            <person name="Mattick J.S."/>
            <person name="Hume D.A."/>
            <person name="Kai C."/>
            <person name="Sasaki D."/>
            <person name="Tomaru Y."/>
            <person name="Fukuda S."/>
            <person name="Kanamori-Katayama M."/>
            <person name="Suzuki M."/>
            <person name="Aoki J."/>
            <person name="Arakawa T."/>
            <person name="Iida J."/>
            <person name="Imamura K."/>
            <person name="Itoh M."/>
            <person name="Kato T."/>
            <person name="Kawaji H."/>
            <person name="Kawagashira N."/>
            <person name="Kawashima T."/>
            <person name="Kojima M."/>
            <person name="Kondo S."/>
            <person name="Konno H."/>
            <person name="Nakano K."/>
            <person name="Ninomiya N."/>
            <person name="Nishio T."/>
            <person name="Okada M."/>
            <person name="Plessy C."/>
            <person name="Shibata K."/>
            <person name="Shiraki T."/>
            <person name="Suzuki S."/>
            <person name="Tagami M."/>
            <person name="Waki K."/>
            <person name="Watahiki A."/>
            <person name="Okamura-Oho Y."/>
            <person name="Suzuki H."/>
            <person name="Kawai J."/>
            <person name="Hayashizaki Y."/>
        </authorList>
    </citation>
    <scope>NUCLEOTIDE SEQUENCE [LARGE SCALE MRNA] (ISOFORM 1)</scope>
    <source>
        <strain>C57BL/6J</strain>
        <strain>NOD</strain>
        <tissue>Head</tissue>
    </source>
</reference>
<reference key="3">
    <citation type="journal article" date="2004" name="Genome Res.">
        <title>The status, quality, and expansion of the NIH full-length cDNA project: the Mammalian Gene Collection (MGC).</title>
        <authorList>
            <consortium name="The MGC Project Team"/>
        </authorList>
    </citation>
    <scope>NUCLEOTIDE SEQUENCE [LARGE SCALE MRNA] (ISOFORM 1)</scope>
    <source>
        <strain>C57BL/6J</strain>
        <tissue>Eye</tissue>
    </source>
</reference>
<reference key="4">
    <citation type="journal article" date="2008" name="Dev. Cell">
        <title>sSgo1, a major splice variant of Sgo1, functions in centriole cohesion where it is regulated by Plk1.</title>
        <authorList>
            <person name="Wang X."/>
            <person name="Yang Y."/>
            <person name="Duan Q."/>
            <person name="Jiang N."/>
            <person name="Huang Y."/>
            <person name="Darzynkiewicz Z."/>
            <person name="Dai W."/>
        </authorList>
    </citation>
    <scope>FUNCTION</scope>
</reference>
<reference key="5">
    <citation type="journal article" date="2008" name="Nat. Cell Biol.">
        <title>Unified mode of centromeric protection by shugoshin in mammalian oocytes and somatic cells.</title>
        <authorList>
            <person name="Lee J."/>
            <person name="Kitajima T.S."/>
            <person name="Tanno Y."/>
            <person name="Yoshida K."/>
            <person name="Morita T."/>
            <person name="Miyano T."/>
            <person name="Miyake M."/>
            <person name="Watanabe Y."/>
        </authorList>
    </citation>
    <scope>FUNCTION</scope>
    <scope>SUBCELLULAR LOCATION</scope>
    <scope>TISSUE SPECIFICITY</scope>
</reference>
<gene>
    <name evidence="2" type="primary">Sgo1</name>
    <name type="synonym">Sgol1</name>
</gene>
<dbReference type="EMBL" id="AB193067">
    <property type="protein sequence ID" value="BAD95540.1"/>
    <property type="molecule type" value="mRNA"/>
</dbReference>
<dbReference type="EMBL" id="AB193068">
    <property type="protein sequence ID" value="BAD95541.1"/>
    <property type="molecule type" value="mRNA"/>
</dbReference>
<dbReference type="EMBL" id="AK014357">
    <property type="protein sequence ID" value="BAB29295.1"/>
    <property type="molecule type" value="mRNA"/>
</dbReference>
<dbReference type="EMBL" id="AK049517">
    <property type="protein sequence ID" value="BAC33789.1"/>
    <property type="molecule type" value="mRNA"/>
</dbReference>
<dbReference type="EMBL" id="AK154188">
    <property type="protein sequence ID" value="BAE32427.1"/>
    <property type="molecule type" value="mRNA"/>
</dbReference>
<dbReference type="EMBL" id="BC089014">
    <property type="protein sequence ID" value="AAH89014.1"/>
    <property type="molecule type" value="mRNA"/>
</dbReference>
<dbReference type="CCDS" id="CCDS28881.1">
    <molecule id="Q9CXH7-1"/>
</dbReference>
<dbReference type="RefSeq" id="NP_082508.1">
    <molecule id="Q9CXH7-1"/>
    <property type="nucleotide sequence ID" value="NM_028232.2"/>
</dbReference>
<dbReference type="RefSeq" id="XP_011244944.1">
    <molecule id="Q9CXH7-1"/>
    <property type="nucleotide sequence ID" value="XM_011246642.4"/>
</dbReference>
<dbReference type="RefSeq" id="XP_017173147.1">
    <property type="nucleotide sequence ID" value="XM_017317658.1"/>
</dbReference>
<dbReference type="SMR" id="Q9CXH7"/>
<dbReference type="BioGRID" id="215364">
    <property type="interactions" value="28"/>
</dbReference>
<dbReference type="FunCoup" id="Q9CXH7">
    <property type="interactions" value="1086"/>
</dbReference>
<dbReference type="IntAct" id="Q9CXH7">
    <property type="interactions" value="15"/>
</dbReference>
<dbReference type="STRING" id="10090.ENSMUSP00000024736"/>
<dbReference type="iPTMnet" id="Q9CXH7"/>
<dbReference type="PhosphoSitePlus" id="Q9CXH7"/>
<dbReference type="jPOST" id="Q9CXH7"/>
<dbReference type="PaxDb" id="10090-ENSMUSP00000024736"/>
<dbReference type="PeptideAtlas" id="Q9CXH7"/>
<dbReference type="ProteomicsDB" id="261339">
    <molecule id="Q9CXH7-1"/>
</dbReference>
<dbReference type="ProteomicsDB" id="261340">
    <molecule id="Q9CXH7-2"/>
</dbReference>
<dbReference type="Pumba" id="Q9CXH7"/>
<dbReference type="Antibodypedia" id="27089">
    <property type="antibodies" value="241 antibodies from 27 providers"/>
</dbReference>
<dbReference type="DNASU" id="72415"/>
<dbReference type="Ensembl" id="ENSMUST00000024736.14">
    <molecule id="Q9CXH7-1"/>
    <property type="protein sequence ID" value="ENSMUSP00000024736.8"/>
    <property type="gene ID" value="ENSMUSG00000023940.15"/>
</dbReference>
<dbReference type="GeneID" id="72415"/>
<dbReference type="KEGG" id="mmu:72415"/>
<dbReference type="UCSC" id="uc008czq.2">
    <molecule id="Q9CXH7-1"/>
    <property type="organism name" value="mouse"/>
</dbReference>
<dbReference type="UCSC" id="uc008czr.2">
    <molecule id="Q9CXH7-2"/>
    <property type="organism name" value="mouse"/>
</dbReference>
<dbReference type="AGR" id="MGI:1919665"/>
<dbReference type="CTD" id="151648"/>
<dbReference type="MGI" id="MGI:1919665">
    <property type="gene designation" value="Sgo1"/>
</dbReference>
<dbReference type="VEuPathDB" id="HostDB:ENSMUSG00000023940"/>
<dbReference type="eggNOG" id="KOG3575">
    <property type="taxonomic scope" value="Eukaryota"/>
</dbReference>
<dbReference type="GeneTree" id="ENSGT00940000154107"/>
<dbReference type="HOGENOM" id="CLU_022813_0_0_1"/>
<dbReference type="InParanoid" id="Q9CXH7"/>
<dbReference type="OMA" id="FNNLCQF"/>
<dbReference type="OrthoDB" id="9901374at2759"/>
<dbReference type="PhylomeDB" id="Q9CXH7"/>
<dbReference type="TreeFam" id="TF334213"/>
<dbReference type="Reactome" id="R-MMU-141444">
    <property type="pathway name" value="Amplification of signal from unattached kinetochores via a MAD2 inhibitory signal"/>
</dbReference>
<dbReference type="Reactome" id="R-MMU-2467813">
    <property type="pathway name" value="Separation of Sister Chromatids"/>
</dbReference>
<dbReference type="Reactome" id="R-MMU-2500257">
    <property type="pathway name" value="Resolution of Sister Chromatid Cohesion"/>
</dbReference>
<dbReference type="Reactome" id="R-MMU-5663220">
    <property type="pathway name" value="RHO GTPases Activate Formins"/>
</dbReference>
<dbReference type="Reactome" id="R-MMU-68877">
    <property type="pathway name" value="Mitotic Prometaphase"/>
</dbReference>
<dbReference type="Reactome" id="R-MMU-9648025">
    <property type="pathway name" value="EML4 and NUDC in mitotic spindle formation"/>
</dbReference>
<dbReference type="BioGRID-ORCS" id="72415">
    <property type="hits" value="4 hits in 81 CRISPR screens"/>
</dbReference>
<dbReference type="ChiTaRS" id="Sgo1">
    <property type="organism name" value="mouse"/>
</dbReference>
<dbReference type="PRO" id="PR:Q9CXH7"/>
<dbReference type="Proteomes" id="UP000000589">
    <property type="component" value="Chromosome 17"/>
</dbReference>
<dbReference type="RNAct" id="Q9CXH7">
    <property type="molecule type" value="protein"/>
</dbReference>
<dbReference type="Bgee" id="ENSMUSG00000023940">
    <property type="expression patterns" value="Expressed in yolk sac and 119 other cell types or tissues"/>
</dbReference>
<dbReference type="GO" id="GO:0005813">
    <property type="term" value="C:centrosome"/>
    <property type="evidence" value="ECO:0000250"/>
    <property type="project" value="UniProtKB"/>
</dbReference>
<dbReference type="GO" id="GO:0000775">
    <property type="term" value="C:chromosome, centromeric region"/>
    <property type="evidence" value="ECO:0000314"/>
    <property type="project" value="UniProtKB"/>
</dbReference>
<dbReference type="GO" id="GO:0000779">
    <property type="term" value="C:condensed chromosome, centromeric region"/>
    <property type="evidence" value="ECO:0000314"/>
    <property type="project" value="MGI"/>
</dbReference>
<dbReference type="GO" id="GO:0005829">
    <property type="term" value="C:cytosol"/>
    <property type="evidence" value="ECO:0007669"/>
    <property type="project" value="Ensembl"/>
</dbReference>
<dbReference type="GO" id="GO:0000776">
    <property type="term" value="C:kinetochore"/>
    <property type="evidence" value="ECO:0000314"/>
    <property type="project" value="UniProtKB"/>
</dbReference>
<dbReference type="GO" id="GO:0016607">
    <property type="term" value="C:nuclear speck"/>
    <property type="evidence" value="ECO:0000250"/>
    <property type="project" value="UniProtKB"/>
</dbReference>
<dbReference type="GO" id="GO:0000922">
    <property type="term" value="C:spindle pole"/>
    <property type="evidence" value="ECO:0000266"/>
    <property type="project" value="MGI"/>
</dbReference>
<dbReference type="GO" id="GO:0019900">
    <property type="term" value="F:kinase binding"/>
    <property type="evidence" value="ECO:0000266"/>
    <property type="project" value="MGI"/>
</dbReference>
<dbReference type="GO" id="GO:0008608">
    <property type="term" value="P:attachment of spindle microtubules to kinetochore"/>
    <property type="evidence" value="ECO:0000250"/>
    <property type="project" value="UniProtKB"/>
</dbReference>
<dbReference type="GO" id="GO:0051301">
    <property type="term" value="P:cell division"/>
    <property type="evidence" value="ECO:0007669"/>
    <property type="project" value="UniProtKB-KW"/>
</dbReference>
<dbReference type="GO" id="GO:0010457">
    <property type="term" value="P:centriole-centriole cohesion"/>
    <property type="evidence" value="ECO:0000315"/>
    <property type="project" value="MGI"/>
</dbReference>
<dbReference type="GO" id="GO:0007059">
    <property type="term" value="P:chromosome segregation"/>
    <property type="evidence" value="ECO:0000250"/>
    <property type="project" value="UniProtKB"/>
</dbReference>
<dbReference type="GO" id="GO:0045132">
    <property type="term" value="P:meiotic chromosome segregation"/>
    <property type="evidence" value="ECO:0000266"/>
    <property type="project" value="MGI"/>
</dbReference>
<dbReference type="GO" id="GO:0071962">
    <property type="term" value="P:mitotic sister chromatid cohesion, centromeric"/>
    <property type="evidence" value="ECO:0007669"/>
    <property type="project" value="Ensembl"/>
</dbReference>
<dbReference type="FunFam" id="1.20.5.730:FF:000004">
    <property type="entry name" value="SGO1 isoform 1"/>
    <property type="match status" value="1"/>
</dbReference>
<dbReference type="Gene3D" id="1.20.5.730">
    <property type="entry name" value="Single helix bin"/>
    <property type="match status" value="1"/>
</dbReference>
<dbReference type="InterPro" id="IPR038889">
    <property type="entry name" value="Shugoshin1/2"/>
</dbReference>
<dbReference type="InterPro" id="IPR011515">
    <property type="entry name" value="Shugoshin_C"/>
</dbReference>
<dbReference type="InterPro" id="IPR011516">
    <property type="entry name" value="Shugoshin_N"/>
</dbReference>
<dbReference type="PANTHER" id="PTHR21577">
    <property type="entry name" value="SHUGOSHIN"/>
    <property type="match status" value="1"/>
</dbReference>
<dbReference type="PANTHER" id="PTHR21577:SF3">
    <property type="entry name" value="SHUGOSHIN 1-RELATED"/>
    <property type="match status" value="1"/>
</dbReference>
<dbReference type="Pfam" id="PF07557">
    <property type="entry name" value="Shugoshin_C"/>
    <property type="match status" value="1"/>
</dbReference>
<dbReference type="Pfam" id="PF07558">
    <property type="entry name" value="Shugoshin_N"/>
    <property type="match status" value="1"/>
</dbReference>
<organism>
    <name type="scientific">Mus musculus</name>
    <name type="common">Mouse</name>
    <dbReference type="NCBI Taxonomy" id="10090"/>
    <lineage>
        <taxon>Eukaryota</taxon>
        <taxon>Metazoa</taxon>
        <taxon>Chordata</taxon>
        <taxon>Craniata</taxon>
        <taxon>Vertebrata</taxon>
        <taxon>Euteleostomi</taxon>
        <taxon>Mammalia</taxon>
        <taxon>Eutheria</taxon>
        <taxon>Euarchontoglires</taxon>
        <taxon>Glires</taxon>
        <taxon>Rodentia</taxon>
        <taxon>Myomorpha</taxon>
        <taxon>Muroidea</taxon>
        <taxon>Muridae</taxon>
        <taxon>Murinae</taxon>
        <taxon>Mus</taxon>
        <taxon>Mus</taxon>
    </lineage>
</organism>